<feature type="chain" id="PRO_1000015116" description="Small ribosomal subunit protein uS10">
    <location>
        <begin position="1"/>
        <end position="103"/>
    </location>
</feature>
<gene>
    <name evidence="1" type="primary">rpsJ</name>
    <name type="ordered locus">Sputw3181_0155</name>
</gene>
<proteinExistence type="inferred from homology"/>
<reference key="1">
    <citation type="submission" date="2006-12" db="EMBL/GenBank/DDBJ databases">
        <title>Complete sequence of Shewanella sp. W3-18-1.</title>
        <authorList>
            <consortium name="US DOE Joint Genome Institute"/>
            <person name="Copeland A."/>
            <person name="Lucas S."/>
            <person name="Lapidus A."/>
            <person name="Barry K."/>
            <person name="Detter J.C."/>
            <person name="Glavina del Rio T."/>
            <person name="Hammon N."/>
            <person name="Israni S."/>
            <person name="Dalin E."/>
            <person name="Tice H."/>
            <person name="Pitluck S."/>
            <person name="Chain P."/>
            <person name="Malfatti S."/>
            <person name="Shin M."/>
            <person name="Vergez L."/>
            <person name="Schmutz J."/>
            <person name="Larimer F."/>
            <person name="Land M."/>
            <person name="Hauser L."/>
            <person name="Kyrpides N."/>
            <person name="Lykidis A."/>
            <person name="Tiedje J."/>
            <person name="Richardson P."/>
        </authorList>
    </citation>
    <scope>NUCLEOTIDE SEQUENCE [LARGE SCALE GENOMIC DNA]</scope>
    <source>
        <strain>W3-18-1</strain>
    </source>
</reference>
<protein>
    <recommendedName>
        <fullName evidence="1">Small ribosomal subunit protein uS10</fullName>
    </recommendedName>
    <alternativeName>
        <fullName evidence="2">30S ribosomal protein S10</fullName>
    </alternativeName>
</protein>
<name>RS10_SHESW</name>
<dbReference type="EMBL" id="CP000503">
    <property type="protein sequence ID" value="ABM23008.1"/>
    <property type="molecule type" value="Genomic_DNA"/>
</dbReference>
<dbReference type="RefSeq" id="WP_006083601.1">
    <property type="nucleotide sequence ID" value="NC_008750.1"/>
</dbReference>
<dbReference type="SMR" id="A1REB3"/>
<dbReference type="GeneID" id="67441759"/>
<dbReference type="KEGG" id="shw:Sputw3181_0155"/>
<dbReference type="HOGENOM" id="CLU_122625_1_3_6"/>
<dbReference type="Proteomes" id="UP000002597">
    <property type="component" value="Chromosome"/>
</dbReference>
<dbReference type="GO" id="GO:1990904">
    <property type="term" value="C:ribonucleoprotein complex"/>
    <property type="evidence" value="ECO:0007669"/>
    <property type="project" value="UniProtKB-KW"/>
</dbReference>
<dbReference type="GO" id="GO:0005840">
    <property type="term" value="C:ribosome"/>
    <property type="evidence" value="ECO:0007669"/>
    <property type="project" value="UniProtKB-KW"/>
</dbReference>
<dbReference type="GO" id="GO:0003735">
    <property type="term" value="F:structural constituent of ribosome"/>
    <property type="evidence" value="ECO:0007669"/>
    <property type="project" value="InterPro"/>
</dbReference>
<dbReference type="GO" id="GO:0000049">
    <property type="term" value="F:tRNA binding"/>
    <property type="evidence" value="ECO:0007669"/>
    <property type="project" value="UniProtKB-UniRule"/>
</dbReference>
<dbReference type="GO" id="GO:0006412">
    <property type="term" value="P:translation"/>
    <property type="evidence" value="ECO:0007669"/>
    <property type="project" value="UniProtKB-UniRule"/>
</dbReference>
<dbReference type="FunFam" id="3.30.70.600:FF:000001">
    <property type="entry name" value="30S ribosomal protein S10"/>
    <property type="match status" value="1"/>
</dbReference>
<dbReference type="Gene3D" id="3.30.70.600">
    <property type="entry name" value="Ribosomal protein S10 domain"/>
    <property type="match status" value="1"/>
</dbReference>
<dbReference type="HAMAP" id="MF_00508">
    <property type="entry name" value="Ribosomal_uS10"/>
    <property type="match status" value="1"/>
</dbReference>
<dbReference type="InterPro" id="IPR001848">
    <property type="entry name" value="Ribosomal_uS10"/>
</dbReference>
<dbReference type="InterPro" id="IPR018268">
    <property type="entry name" value="Ribosomal_uS10_CS"/>
</dbReference>
<dbReference type="InterPro" id="IPR027486">
    <property type="entry name" value="Ribosomal_uS10_dom"/>
</dbReference>
<dbReference type="InterPro" id="IPR036838">
    <property type="entry name" value="Ribosomal_uS10_dom_sf"/>
</dbReference>
<dbReference type="NCBIfam" id="NF001861">
    <property type="entry name" value="PRK00596.1"/>
    <property type="match status" value="1"/>
</dbReference>
<dbReference type="NCBIfam" id="TIGR01049">
    <property type="entry name" value="rpsJ_bact"/>
    <property type="match status" value="1"/>
</dbReference>
<dbReference type="PANTHER" id="PTHR11700">
    <property type="entry name" value="30S RIBOSOMAL PROTEIN S10 FAMILY MEMBER"/>
    <property type="match status" value="1"/>
</dbReference>
<dbReference type="Pfam" id="PF00338">
    <property type="entry name" value="Ribosomal_S10"/>
    <property type="match status" value="1"/>
</dbReference>
<dbReference type="PRINTS" id="PR00971">
    <property type="entry name" value="RIBOSOMALS10"/>
</dbReference>
<dbReference type="SMART" id="SM01403">
    <property type="entry name" value="Ribosomal_S10"/>
    <property type="match status" value="1"/>
</dbReference>
<dbReference type="SUPFAM" id="SSF54999">
    <property type="entry name" value="Ribosomal protein S10"/>
    <property type="match status" value="1"/>
</dbReference>
<dbReference type="PROSITE" id="PS00361">
    <property type="entry name" value="RIBOSOMAL_S10"/>
    <property type="match status" value="1"/>
</dbReference>
<comment type="function">
    <text evidence="1">Involved in the binding of tRNA to the ribosomes.</text>
</comment>
<comment type="subunit">
    <text evidence="1">Part of the 30S ribosomal subunit.</text>
</comment>
<comment type="similarity">
    <text evidence="1">Belongs to the universal ribosomal protein uS10 family.</text>
</comment>
<evidence type="ECO:0000255" key="1">
    <source>
        <dbReference type="HAMAP-Rule" id="MF_00508"/>
    </source>
</evidence>
<evidence type="ECO:0000305" key="2"/>
<accession>A1REB3</accession>
<sequence length="103" mass="11783">MQNQRIRIRLKGFDHRLIDQSTAEIVETAKRTGAQVRGPIPLPTRKERYTILISPHVNKDARDQYELRTHKRLVDIVEPTEKTVDALMRLDLAAGVDVQISLG</sequence>
<organism>
    <name type="scientific">Shewanella sp. (strain W3-18-1)</name>
    <dbReference type="NCBI Taxonomy" id="351745"/>
    <lineage>
        <taxon>Bacteria</taxon>
        <taxon>Pseudomonadati</taxon>
        <taxon>Pseudomonadota</taxon>
        <taxon>Gammaproteobacteria</taxon>
        <taxon>Alteromonadales</taxon>
        <taxon>Shewanellaceae</taxon>
        <taxon>Shewanella</taxon>
    </lineage>
</organism>
<keyword id="KW-0687">Ribonucleoprotein</keyword>
<keyword id="KW-0689">Ribosomal protein</keyword>